<comment type="function">
    <text evidence="1">Binds to 23S rRNA. Forms part of two intersubunit bridges in the 70S ribosome.</text>
</comment>
<comment type="subunit">
    <text evidence="1">Part of the 50S ribosomal subunit. Forms a cluster with proteins L3 and L19. In the 70S ribosome, L14 and L19 interact and together make contacts with the 16S rRNA in bridges B5 and B8.</text>
</comment>
<comment type="similarity">
    <text evidence="1">Belongs to the universal ribosomal protein uL14 family.</text>
</comment>
<keyword id="KW-1185">Reference proteome</keyword>
<keyword id="KW-0687">Ribonucleoprotein</keyword>
<keyword id="KW-0689">Ribosomal protein</keyword>
<keyword id="KW-0694">RNA-binding</keyword>
<keyword id="KW-0699">rRNA-binding</keyword>
<organism>
    <name type="scientific">Pseudothermotoga lettingae (strain ATCC BAA-301 / DSM 14385 / NBRC 107922 / TMO)</name>
    <name type="common">Thermotoga lettingae</name>
    <dbReference type="NCBI Taxonomy" id="416591"/>
    <lineage>
        <taxon>Bacteria</taxon>
        <taxon>Thermotogati</taxon>
        <taxon>Thermotogota</taxon>
        <taxon>Thermotogae</taxon>
        <taxon>Thermotogales</taxon>
        <taxon>Thermotogaceae</taxon>
        <taxon>Pseudothermotoga</taxon>
    </lineage>
</organism>
<dbReference type="EMBL" id="CP000812">
    <property type="protein sequence ID" value="ABV33155.1"/>
    <property type="molecule type" value="Genomic_DNA"/>
</dbReference>
<dbReference type="RefSeq" id="WP_012002636.1">
    <property type="nucleotide sequence ID" value="NZ_BSDV01000001.1"/>
</dbReference>
<dbReference type="SMR" id="A8F4S1"/>
<dbReference type="STRING" id="416591.Tlet_0589"/>
<dbReference type="KEGG" id="tle:Tlet_0589"/>
<dbReference type="eggNOG" id="COG0093">
    <property type="taxonomic scope" value="Bacteria"/>
</dbReference>
<dbReference type="HOGENOM" id="CLU_095071_2_1_0"/>
<dbReference type="OrthoDB" id="9806379at2"/>
<dbReference type="Proteomes" id="UP000002016">
    <property type="component" value="Chromosome"/>
</dbReference>
<dbReference type="GO" id="GO:0022625">
    <property type="term" value="C:cytosolic large ribosomal subunit"/>
    <property type="evidence" value="ECO:0007669"/>
    <property type="project" value="TreeGrafter"/>
</dbReference>
<dbReference type="GO" id="GO:0070180">
    <property type="term" value="F:large ribosomal subunit rRNA binding"/>
    <property type="evidence" value="ECO:0007669"/>
    <property type="project" value="TreeGrafter"/>
</dbReference>
<dbReference type="GO" id="GO:0003735">
    <property type="term" value="F:structural constituent of ribosome"/>
    <property type="evidence" value="ECO:0007669"/>
    <property type="project" value="InterPro"/>
</dbReference>
<dbReference type="GO" id="GO:0006412">
    <property type="term" value="P:translation"/>
    <property type="evidence" value="ECO:0007669"/>
    <property type="project" value="UniProtKB-UniRule"/>
</dbReference>
<dbReference type="CDD" id="cd00337">
    <property type="entry name" value="Ribosomal_uL14"/>
    <property type="match status" value="1"/>
</dbReference>
<dbReference type="FunFam" id="2.40.150.20:FF:000001">
    <property type="entry name" value="50S ribosomal protein L14"/>
    <property type="match status" value="1"/>
</dbReference>
<dbReference type="Gene3D" id="2.40.150.20">
    <property type="entry name" value="Ribosomal protein L14"/>
    <property type="match status" value="1"/>
</dbReference>
<dbReference type="HAMAP" id="MF_01367">
    <property type="entry name" value="Ribosomal_uL14"/>
    <property type="match status" value="1"/>
</dbReference>
<dbReference type="InterPro" id="IPR000218">
    <property type="entry name" value="Ribosomal_uL14"/>
</dbReference>
<dbReference type="InterPro" id="IPR005745">
    <property type="entry name" value="Ribosomal_uL14_bac-type"/>
</dbReference>
<dbReference type="InterPro" id="IPR019972">
    <property type="entry name" value="Ribosomal_uL14_CS"/>
</dbReference>
<dbReference type="InterPro" id="IPR036853">
    <property type="entry name" value="Ribosomal_uL14_sf"/>
</dbReference>
<dbReference type="NCBIfam" id="TIGR01067">
    <property type="entry name" value="rplN_bact"/>
    <property type="match status" value="1"/>
</dbReference>
<dbReference type="PANTHER" id="PTHR11761">
    <property type="entry name" value="50S/60S RIBOSOMAL PROTEIN L14/L23"/>
    <property type="match status" value="1"/>
</dbReference>
<dbReference type="PANTHER" id="PTHR11761:SF3">
    <property type="entry name" value="LARGE RIBOSOMAL SUBUNIT PROTEIN UL14M"/>
    <property type="match status" value="1"/>
</dbReference>
<dbReference type="Pfam" id="PF00238">
    <property type="entry name" value="Ribosomal_L14"/>
    <property type="match status" value="1"/>
</dbReference>
<dbReference type="SMART" id="SM01374">
    <property type="entry name" value="Ribosomal_L14"/>
    <property type="match status" value="1"/>
</dbReference>
<dbReference type="SUPFAM" id="SSF50193">
    <property type="entry name" value="Ribosomal protein L14"/>
    <property type="match status" value="1"/>
</dbReference>
<dbReference type="PROSITE" id="PS00049">
    <property type="entry name" value="RIBOSOMAL_L14"/>
    <property type="match status" value="1"/>
</dbReference>
<name>RL14_PSELT</name>
<accession>A8F4S1</accession>
<reference key="1">
    <citation type="submission" date="2007-08" db="EMBL/GenBank/DDBJ databases">
        <title>Complete sequence of Thermotoga lettingae TMO.</title>
        <authorList>
            <consortium name="US DOE Joint Genome Institute"/>
            <person name="Copeland A."/>
            <person name="Lucas S."/>
            <person name="Lapidus A."/>
            <person name="Barry K."/>
            <person name="Glavina del Rio T."/>
            <person name="Dalin E."/>
            <person name="Tice H."/>
            <person name="Pitluck S."/>
            <person name="Foster B."/>
            <person name="Bruce D."/>
            <person name="Schmutz J."/>
            <person name="Larimer F."/>
            <person name="Land M."/>
            <person name="Hauser L."/>
            <person name="Kyrpides N."/>
            <person name="Mikhailova N."/>
            <person name="Nelson K."/>
            <person name="Gogarten J.P."/>
            <person name="Noll K."/>
            <person name="Richardson P."/>
        </authorList>
    </citation>
    <scope>NUCLEOTIDE SEQUENCE [LARGE SCALE GENOMIC DNA]</scope>
    <source>
        <strain>ATCC BAA-301 / DSM 14385 / NBRC 107922 / TMO</strain>
    </source>
</reference>
<gene>
    <name evidence="1" type="primary">rplN</name>
    <name type="ordered locus">Tlet_0589</name>
</gene>
<feature type="chain" id="PRO_1000068012" description="Large ribosomal subunit protein uL14">
    <location>
        <begin position="1"/>
        <end position="122"/>
    </location>
</feature>
<sequence length="122" mass="13586">MIQNESYLNVADNSGAKKLRVIRVMGGFHKKYGTVGDIVVCSVRDVVPNTGIKKGEVVKAVIVRTKKPVRRPDGTYIRFDDNAAVLIDKFNEPRGTRVFGPVAREIREKGYMKIISLAPEVL</sequence>
<protein>
    <recommendedName>
        <fullName evidence="1">Large ribosomal subunit protein uL14</fullName>
    </recommendedName>
    <alternativeName>
        <fullName evidence="2">50S ribosomal protein L14</fullName>
    </alternativeName>
</protein>
<proteinExistence type="inferred from homology"/>
<evidence type="ECO:0000255" key="1">
    <source>
        <dbReference type="HAMAP-Rule" id="MF_01367"/>
    </source>
</evidence>
<evidence type="ECO:0000305" key="2"/>